<sequence length="406" mass="45457">MKKDIKKVVLAYSGGLDTSIILKWLQDEYKSEVVTFTADIGQGEELEPARKKALSLGVKEENIFIKDLKDEFVKDYVFAMFRANAIYEGEYLLGTSIARPLIAKALVEIANKTNADAISHGATGKGNDQVRFELGALALNPNLAIIAPWREWDLNSREKLLAYAQKHGIDIVKKADKSPYSMDANLLHISYEGLVLEDPAAKPEADMWRWVRDLKQTPNESEVIELEFSKGDLCAINGEKMSPAQLLAKLNELGAKHGIGRLDIVENRYVGMKSRGCYETPGGSILLKAHRAIESITLDREAAHLKDELMPKYASLIYNGYWFSPERLMLQALIDESQKHVNGKVKLELYKGNVMVIGRESANDSLFSEAYCTFEEDSVYDQKDAAGFIKLNALRFIIAGKNGRKF</sequence>
<proteinExistence type="inferred from homology"/>
<reference key="1">
    <citation type="journal article" date="2008" name="Foodborne Pathog. Dis.">
        <title>The complete genome sequence and analysis of the human pathogen Campylobacter lari.</title>
        <authorList>
            <person name="Miller W.G."/>
            <person name="Wang G."/>
            <person name="Binnewies T.T."/>
            <person name="Parker C.T."/>
        </authorList>
    </citation>
    <scope>NUCLEOTIDE SEQUENCE [LARGE SCALE GENOMIC DNA]</scope>
    <source>
        <strain>RM2100 / D67 / ATCC BAA-1060</strain>
    </source>
</reference>
<gene>
    <name evidence="1" type="primary">argG</name>
    <name type="ordered locus">Cla_0754</name>
</gene>
<dbReference type="EC" id="6.3.4.5" evidence="1"/>
<dbReference type="EMBL" id="CP000932">
    <property type="protein sequence ID" value="ACM64082.1"/>
    <property type="molecule type" value="Genomic_DNA"/>
</dbReference>
<dbReference type="RefSeq" id="WP_012661465.1">
    <property type="nucleotide sequence ID" value="NC_012039.1"/>
</dbReference>
<dbReference type="SMR" id="B9KG97"/>
<dbReference type="STRING" id="306263.Cla_0754"/>
<dbReference type="KEGG" id="cla:CLA_0754"/>
<dbReference type="PATRIC" id="fig|306263.5.peg.734"/>
<dbReference type="eggNOG" id="COG0137">
    <property type="taxonomic scope" value="Bacteria"/>
</dbReference>
<dbReference type="HOGENOM" id="CLU_032784_4_2_7"/>
<dbReference type="UniPathway" id="UPA00068">
    <property type="reaction ID" value="UER00113"/>
</dbReference>
<dbReference type="Proteomes" id="UP000007727">
    <property type="component" value="Chromosome"/>
</dbReference>
<dbReference type="GO" id="GO:0005737">
    <property type="term" value="C:cytoplasm"/>
    <property type="evidence" value="ECO:0007669"/>
    <property type="project" value="UniProtKB-SubCell"/>
</dbReference>
<dbReference type="GO" id="GO:0004055">
    <property type="term" value="F:argininosuccinate synthase activity"/>
    <property type="evidence" value="ECO:0007669"/>
    <property type="project" value="UniProtKB-UniRule"/>
</dbReference>
<dbReference type="GO" id="GO:0005524">
    <property type="term" value="F:ATP binding"/>
    <property type="evidence" value="ECO:0007669"/>
    <property type="project" value="UniProtKB-UniRule"/>
</dbReference>
<dbReference type="GO" id="GO:0000053">
    <property type="term" value="P:argininosuccinate metabolic process"/>
    <property type="evidence" value="ECO:0007669"/>
    <property type="project" value="TreeGrafter"/>
</dbReference>
<dbReference type="GO" id="GO:0006526">
    <property type="term" value="P:L-arginine biosynthetic process"/>
    <property type="evidence" value="ECO:0007669"/>
    <property type="project" value="UniProtKB-UniRule"/>
</dbReference>
<dbReference type="GO" id="GO:0000050">
    <property type="term" value="P:urea cycle"/>
    <property type="evidence" value="ECO:0007669"/>
    <property type="project" value="TreeGrafter"/>
</dbReference>
<dbReference type="CDD" id="cd01999">
    <property type="entry name" value="ASS"/>
    <property type="match status" value="1"/>
</dbReference>
<dbReference type="FunFam" id="3.40.50.620:FF:000019">
    <property type="entry name" value="Argininosuccinate synthase"/>
    <property type="match status" value="1"/>
</dbReference>
<dbReference type="FunFam" id="3.90.1260.10:FF:000007">
    <property type="entry name" value="Argininosuccinate synthase"/>
    <property type="match status" value="1"/>
</dbReference>
<dbReference type="Gene3D" id="3.90.1260.10">
    <property type="entry name" value="Argininosuccinate synthetase, chain A, domain 2"/>
    <property type="match status" value="1"/>
</dbReference>
<dbReference type="Gene3D" id="3.40.50.620">
    <property type="entry name" value="HUPs"/>
    <property type="match status" value="1"/>
</dbReference>
<dbReference type="Gene3D" id="1.20.5.470">
    <property type="entry name" value="Single helix bin"/>
    <property type="match status" value="1"/>
</dbReference>
<dbReference type="HAMAP" id="MF_00005">
    <property type="entry name" value="Arg_succ_synth_type1"/>
    <property type="match status" value="1"/>
</dbReference>
<dbReference type="InterPro" id="IPR048268">
    <property type="entry name" value="Arginosuc_syn_C"/>
</dbReference>
<dbReference type="InterPro" id="IPR048267">
    <property type="entry name" value="Arginosuc_syn_N"/>
</dbReference>
<dbReference type="InterPro" id="IPR001518">
    <property type="entry name" value="Arginosuc_synth"/>
</dbReference>
<dbReference type="InterPro" id="IPR018223">
    <property type="entry name" value="Arginosuc_synth_CS"/>
</dbReference>
<dbReference type="InterPro" id="IPR023434">
    <property type="entry name" value="Arginosuc_synth_type_1_subfam"/>
</dbReference>
<dbReference type="InterPro" id="IPR024074">
    <property type="entry name" value="AS_cat/multimer_dom_body"/>
</dbReference>
<dbReference type="InterPro" id="IPR014729">
    <property type="entry name" value="Rossmann-like_a/b/a_fold"/>
</dbReference>
<dbReference type="NCBIfam" id="TIGR00032">
    <property type="entry name" value="argG"/>
    <property type="match status" value="1"/>
</dbReference>
<dbReference type="NCBIfam" id="NF001770">
    <property type="entry name" value="PRK00509.1"/>
    <property type="match status" value="1"/>
</dbReference>
<dbReference type="PANTHER" id="PTHR11587">
    <property type="entry name" value="ARGININOSUCCINATE SYNTHASE"/>
    <property type="match status" value="1"/>
</dbReference>
<dbReference type="PANTHER" id="PTHR11587:SF2">
    <property type="entry name" value="ARGININOSUCCINATE SYNTHASE"/>
    <property type="match status" value="1"/>
</dbReference>
<dbReference type="Pfam" id="PF20979">
    <property type="entry name" value="Arginosuc_syn_C"/>
    <property type="match status" value="1"/>
</dbReference>
<dbReference type="Pfam" id="PF00764">
    <property type="entry name" value="Arginosuc_synth"/>
    <property type="match status" value="1"/>
</dbReference>
<dbReference type="SUPFAM" id="SSF52402">
    <property type="entry name" value="Adenine nucleotide alpha hydrolases-like"/>
    <property type="match status" value="1"/>
</dbReference>
<dbReference type="SUPFAM" id="SSF69864">
    <property type="entry name" value="Argininosuccinate synthetase, C-terminal domain"/>
    <property type="match status" value="1"/>
</dbReference>
<dbReference type="PROSITE" id="PS00564">
    <property type="entry name" value="ARGININOSUCCIN_SYN_1"/>
    <property type="match status" value="1"/>
</dbReference>
<dbReference type="PROSITE" id="PS00565">
    <property type="entry name" value="ARGININOSUCCIN_SYN_2"/>
    <property type="match status" value="1"/>
</dbReference>
<comment type="catalytic activity">
    <reaction evidence="1">
        <text>L-citrulline + L-aspartate + ATP = 2-(N(omega)-L-arginino)succinate + AMP + diphosphate + H(+)</text>
        <dbReference type="Rhea" id="RHEA:10932"/>
        <dbReference type="ChEBI" id="CHEBI:15378"/>
        <dbReference type="ChEBI" id="CHEBI:29991"/>
        <dbReference type="ChEBI" id="CHEBI:30616"/>
        <dbReference type="ChEBI" id="CHEBI:33019"/>
        <dbReference type="ChEBI" id="CHEBI:57472"/>
        <dbReference type="ChEBI" id="CHEBI:57743"/>
        <dbReference type="ChEBI" id="CHEBI:456215"/>
        <dbReference type="EC" id="6.3.4.5"/>
    </reaction>
</comment>
<comment type="pathway">
    <text evidence="1">Amino-acid biosynthesis; L-arginine biosynthesis; L-arginine from L-ornithine and carbamoyl phosphate: step 2/3.</text>
</comment>
<comment type="subunit">
    <text evidence="1">Homotetramer.</text>
</comment>
<comment type="subcellular location">
    <subcellularLocation>
        <location evidence="1">Cytoplasm</location>
    </subcellularLocation>
</comment>
<comment type="similarity">
    <text evidence="1">Belongs to the argininosuccinate synthase family. Type 1 subfamily.</text>
</comment>
<accession>B9KG97</accession>
<name>ASSY_CAMLR</name>
<protein>
    <recommendedName>
        <fullName evidence="1">Argininosuccinate synthase</fullName>
        <ecNumber evidence="1">6.3.4.5</ecNumber>
    </recommendedName>
    <alternativeName>
        <fullName evidence="1">Citrulline--aspartate ligase</fullName>
    </alternativeName>
</protein>
<feature type="chain" id="PRO_1000191887" description="Argininosuccinate synthase">
    <location>
        <begin position="1"/>
        <end position="406"/>
    </location>
</feature>
<feature type="binding site" evidence="1">
    <location>
        <begin position="11"/>
        <end position="19"/>
    </location>
    <ligand>
        <name>ATP</name>
        <dbReference type="ChEBI" id="CHEBI:30616"/>
    </ligand>
</feature>
<feature type="binding site" evidence="1">
    <location>
        <position position="38"/>
    </location>
    <ligand>
        <name>ATP</name>
        <dbReference type="ChEBI" id="CHEBI:30616"/>
    </ligand>
</feature>
<feature type="binding site" evidence="1">
    <location>
        <position position="91"/>
    </location>
    <ligand>
        <name>L-citrulline</name>
        <dbReference type="ChEBI" id="CHEBI:57743"/>
    </ligand>
</feature>
<feature type="binding site" evidence="1">
    <location>
        <position position="96"/>
    </location>
    <ligand>
        <name>L-citrulline</name>
        <dbReference type="ChEBI" id="CHEBI:57743"/>
    </ligand>
</feature>
<feature type="binding site" evidence="1">
    <location>
        <position position="121"/>
    </location>
    <ligand>
        <name>ATP</name>
        <dbReference type="ChEBI" id="CHEBI:30616"/>
    </ligand>
</feature>
<feature type="binding site" evidence="1">
    <location>
        <position position="123"/>
    </location>
    <ligand>
        <name>L-aspartate</name>
        <dbReference type="ChEBI" id="CHEBI:29991"/>
    </ligand>
</feature>
<feature type="binding site" evidence="1">
    <location>
        <position position="127"/>
    </location>
    <ligand>
        <name>L-aspartate</name>
        <dbReference type="ChEBI" id="CHEBI:29991"/>
    </ligand>
</feature>
<feature type="binding site" evidence="1">
    <location>
        <position position="127"/>
    </location>
    <ligand>
        <name>L-citrulline</name>
        <dbReference type="ChEBI" id="CHEBI:57743"/>
    </ligand>
</feature>
<feature type="binding site" evidence="1">
    <location>
        <position position="128"/>
    </location>
    <ligand>
        <name>L-aspartate</name>
        <dbReference type="ChEBI" id="CHEBI:29991"/>
    </ligand>
</feature>
<feature type="binding site" evidence="1">
    <location>
        <position position="131"/>
    </location>
    <ligand>
        <name>L-citrulline</name>
        <dbReference type="ChEBI" id="CHEBI:57743"/>
    </ligand>
</feature>
<feature type="binding site" evidence="1">
    <location>
        <position position="181"/>
    </location>
    <ligand>
        <name>L-citrulline</name>
        <dbReference type="ChEBI" id="CHEBI:57743"/>
    </ligand>
</feature>
<feature type="binding site" evidence="1">
    <location>
        <position position="190"/>
    </location>
    <ligand>
        <name>L-citrulline</name>
        <dbReference type="ChEBI" id="CHEBI:57743"/>
    </ligand>
</feature>
<feature type="binding site" evidence="1">
    <location>
        <position position="266"/>
    </location>
    <ligand>
        <name>L-citrulline</name>
        <dbReference type="ChEBI" id="CHEBI:57743"/>
    </ligand>
</feature>
<feature type="binding site" evidence="1">
    <location>
        <position position="278"/>
    </location>
    <ligand>
        <name>L-citrulline</name>
        <dbReference type="ChEBI" id="CHEBI:57743"/>
    </ligand>
</feature>
<keyword id="KW-0028">Amino-acid biosynthesis</keyword>
<keyword id="KW-0055">Arginine biosynthesis</keyword>
<keyword id="KW-0067">ATP-binding</keyword>
<keyword id="KW-0963">Cytoplasm</keyword>
<keyword id="KW-0436">Ligase</keyword>
<keyword id="KW-0547">Nucleotide-binding</keyword>
<keyword id="KW-1185">Reference proteome</keyword>
<organism>
    <name type="scientific">Campylobacter lari (strain RM2100 / D67 / ATCC BAA-1060)</name>
    <dbReference type="NCBI Taxonomy" id="306263"/>
    <lineage>
        <taxon>Bacteria</taxon>
        <taxon>Pseudomonadati</taxon>
        <taxon>Campylobacterota</taxon>
        <taxon>Epsilonproteobacteria</taxon>
        <taxon>Campylobacterales</taxon>
        <taxon>Campylobacteraceae</taxon>
        <taxon>Campylobacter</taxon>
    </lineage>
</organism>
<evidence type="ECO:0000255" key="1">
    <source>
        <dbReference type="HAMAP-Rule" id="MF_00005"/>
    </source>
</evidence>